<keyword id="KW-0150">Chloroplast</keyword>
<keyword id="KW-0472">Membrane</keyword>
<keyword id="KW-0602">Photosynthesis</keyword>
<keyword id="KW-0934">Plastid</keyword>
<keyword id="KW-0793">Thylakoid</keyword>
<keyword id="KW-0812">Transmembrane</keyword>
<keyword id="KW-1133">Transmembrane helix</keyword>
<gene>
    <name evidence="1" type="primary">ycf4</name>
</gene>
<evidence type="ECO:0000255" key="1">
    <source>
        <dbReference type="HAMAP-Rule" id="MF_00437"/>
    </source>
</evidence>
<name>YCF4_PLAOC</name>
<sequence length="184" mass="21524">MNWRSERIWIELITGSRKTSNFCWAFILFLGSLGFLLVGTSSYLGRNLISLFPSQQIIFFPQGIVMSFYGIAGLFISSYLWCTISWNVGSGYDRFDRKEGIVCIFRWGFPGKNRRIFLRFFMKDIQSIRIEVKEGLYPRRVLYMEIRGQGAIPLTRTDENLTPREIEQKAAELAYFLRVPIEVF</sequence>
<protein>
    <recommendedName>
        <fullName evidence="1">Photosystem I assembly protein Ycf4</fullName>
    </recommendedName>
</protein>
<feature type="chain" id="PRO_0000326022" description="Photosystem I assembly protein Ycf4">
    <location>
        <begin position="1"/>
        <end position="184"/>
    </location>
</feature>
<feature type="transmembrane region" description="Helical" evidence="1">
    <location>
        <begin position="22"/>
        <end position="42"/>
    </location>
</feature>
<feature type="transmembrane region" description="Helical" evidence="1">
    <location>
        <begin position="57"/>
        <end position="77"/>
    </location>
</feature>
<organism>
    <name type="scientific">Platanus occidentalis</name>
    <name type="common">Sycamore</name>
    <name type="synonym">American plane tree</name>
    <dbReference type="NCBI Taxonomy" id="4403"/>
    <lineage>
        <taxon>Eukaryota</taxon>
        <taxon>Viridiplantae</taxon>
        <taxon>Streptophyta</taxon>
        <taxon>Embryophyta</taxon>
        <taxon>Tracheophyta</taxon>
        <taxon>Spermatophyta</taxon>
        <taxon>Magnoliopsida</taxon>
        <taxon>Proteales</taxon>
        <taxon>Platanaceae</taxon>
        <taxon>Platanus</taxon>
    </lineage>
</organism>
<dbReference type="EMBL" id="DQ923116">
    <property type="protein sequence ID" value="ABI49789.1"/>
    <property type="molecule type" value="Genomic_DNA"/>
</dbReference>
<dbReference type="RefSeq" id="YP_740576.1">
    <property type="nucleotide sequence ID" value="NC_008335.1"/>
</dbReference>
<dbReference type="GeneID" id="4271301"/>
<dbReference type="GO" id="GO:0009535">
    <property type="term" value="C:chloroplast thylakoid membrane"/>
    <property type="evidence" value="ECO:0007669"/>
    <property type="project" value="UniProtKB-SubCell"/>
</dbReference>
<dbReference type="GO" id="GO:0009522">
    <property type="term" value="C:photosystem I"/>
    <property type="evidence" value="ECO:0007669"/>
    <property type="project" value="InterPro"/>
</dbReference>
<dbReference type="GO" id="GO:0015979">
    <property type="term" value="P:photosynthesis"/>
    <property type="evidence" value="ECO:0007669"/>
    <property type="project" value="UniProtKB-UniRule"/>
</dbReference>
<dbReference type="HAMAP" id="MF_00437">
    <property type="entry name" value="Ycf4"/>
    <property type="match status" value="1"/>
</dbReference>
<dbReference type="InterPro" id="IPR003359">
    <property type="entry name" value="PSI_Ycf4_assembly"/>
</dbReference>
<dbReference type="NCBIfam" id="NF002712">
    <property type="entry name" value="PRK02542.1"/>
    <property type="match status" value="1"/>
</dbReference>
<dbReference type="PANTHER" id="PTHR33288">
    <property type="match status" value="1"/>
</dbReference>
<dbReference type="PANTHER" id="PTHR33288:SF4">
    <property type="entry name" value="PHOTOSYSTEM I ASSEMBLY PROTEIN YCF4"/>
    <property type="match status" value="1"/>
</dbReference>
<dbReference type="Pfam" id="PF02392">
    <property type="entry name" value="Ycf4"/>
    <property type="match status" value="1"/>
</dbReference>
<proteinExistence type="inferred from homology"/>
<reference key="1">
    <citation type="journal article" date="2006" name="BMC Plant Biol.">
        <title>Rapid and accurate pyrosequencing of angiosperm plastid genomes.</title>
        <authorList>
            <person name="Moore M.J."/>
            <person name="Dhingra A."/>
            <person name="Soltis P.S."/>
            <person name="Shaw R."/>
            <person name="Farmerie W.G."/>
            <person name="Folta K.M."/>
            <person name="Soltis D.E."/>
        </authorList>
    </citation>
    <scope>NUCLEOTIDE SEQUENCE [LARGE SCALE GENOMIC DNA]</scope>
</reference>
<comment type="function">
    <text evidence="1">Seems to be required for the assembly of the photosystem I complex.</text>
</comment>
<comment type="subcellular location">
    <subcellularLocation>
        <location evidence="1">Plastid</location>
        <location evidence="1">Chloroplast thylakoid membrane</location>
        <topology evidence="1">Multi-pass membrane protein</topology>
    </subcellularLocation>
</comment>
<comment type="similarity">
    <text evidence="1">Belongs to the Ycf4 family.</text>
</comment>
<geneLocation type="chloroplast"/>
<accession>Q09G35</accession>